<evidence type="ECO:0000255" key="1">
    <source>
        <dbReference type="HAMAP-Rule" id="MF_00495"/>
    </source>
</evidence>
<evidence type="ECO:0000305" key="2"/>
<reference key="1">
    <citation type="journal article" date="2011" name="Stand. Genomic Sci.">
        <title>Complete genome sequence of Rhodospirillum rubrum type strain (S1).</title>
        <authorList>
            <person name="Munk A.C."/>
            <person name="Copeland A."/>
            <person name="Lucas S."/>
            <person name="Lapidus A."/>
            <person name="Del Rio T.G."/>
            <person name="Barry K."/>
            <person name="Detter J.C."/>
            <person name="Hammon N."/>
            <person name="Israni S."/>
            <person name="Pitluck S."/>
            <person name="Brettin T."/>
            <person name="Bruce D."/>
            <person name="Han C."/>
            <person name="Tapia R."/>
            <person name="Gilna P."/>
            <person name="Schmutz J."/>
            <person name="Larimer F."/>
            <person name="Land M."/>
            <person name="Kyrpides N.C."/>
            <person name="Mavromatis K."/>
            <person name="Richardson P."/>
            <person name="Rohde M."/>
            <person name="Goeker M."/>
            <person name="Klenk H.P."/>
            <person name="Zhang Y."/>
            <person name="Roberts G.P."/>
            <person name="Reslewic S."/>
            <person name="Schwartz D.C."/>
        </authorList>
    </citation>
    <scope>NUCLEOTIDE SEQUENCE [LARGE SCALE GENOMIC DNA]</scope>
    <source>
        <strain>ATCC 11170 / ATH 1.1.1 / DSM 467 / LMG 4362 / NCIMB 8255 / S1</strain>
    </source>
</reference>
<protein>
    <recommendedName>
        <fullName evidence="1">Phosphoglycolate phosphatase</fullName>
        <shortName evidence="1">PGP</shortName>
        <shortName evidence="1">PGPase</shortName>
        <ecNumber evidence="1">3.1.3.18</ecNumber>
    </recommendedName>
</protein>
<keyword id="KW-0113">Calvin cycle</keyword>
<keyword id="KW-0119">Carbohydrate metabolism</keyword>
<keyword id="KW-0378">Hydrolase</keyword>
<keyword id="KW-0460">Magnesium</keyword>
<keyword id="KW-0479">Metal-binding</keyword>
<keyword id="KW-0602">Photosynthesis</keyword>
<keyword id="KW-1185">Reference proteome</keyword>
<dbReference type="EC" id="3.1.3.18" evidence="1"/>
<dbReference type="EMBL" id="CP000230">
    <property type="protein sequence ID" value="ABC23826.1"/>
    <property type="status" value="ALT_INIT"/>
    <property type="molecule type" value="Genomic_DNA"/>
</dbReference>
<dbReference type="RefSeq" id="YP_428113.1">
    <property type="nucleotide sequence ID" value="NC_007643.1"/>
</dbReference>
<dbReference type="SMR" id="Q2RPW9"/>
<dbReference type="STRING" id="269796.Rru_A3031"/>
<dbReference type="EnsemblBacteria" id="ABC23826">
    <property type="protein sequence ID" value="ABC23826"/>
    <property type="gene ID" value="Rru_A3031"/>
</dbReference>
<dbReference type="KEGG" id="rru:Rru_A3031"/>
<dbReference type="PATRIC" id="fig|269796.9.peg.3141"/>
<dbReference type="eggNOG" id="COG0546">
    <property type="taxonomic scope" value="Bacteria"/>
</dbReference>
<dbReference type="HOGENOM" id="CLU_045011_19_1_5"/>
<dbReference type="PhylomeDB" id="Q2RPW9"/>
<dbReference type="UniPathway" id="UPA00865">
    <property type="reaction ID" value="UER00834"/>
</dbReference>
<dbReference type="Proteomes" id="UP000001929">
    <property type="component" value="Chromosome"/>
</dbReference>
<dbReference type="GO" id="GO:0005829">
    <property type="term" value="C:cytosol"/>
    <property type="evidence" value="ECO:0007669"/>
    <property type="project" value="TreeGrafter"/>
</dbReference>
<dbReference type="GO" id="GO:0046872">
    <property type="term" value="F:metal ion binding"/>
    <property type="evidence" value="ECO:0007669"/>
    <property type="project" value="UniProtKB-KW"/>
</dbReference>
<dbReference type="GO" id="GO:0008967">
    <property type="term" value="F:phosphoglycolate phosphatase activity"/>
    <property type="evidence" value="ECO:0007669"/>
    <property type="project" value="UniProtKB-UniRule"/>
</dbReference>
<dbReference type="GO" id="GO:0006281">
    <property type="term" value="P:DNA repair"/>
    <property type="evidence" value="ECO:0007669"/>
    <property type="project" value="TreeGrafter"/>
</dbReference>
<dbReference type="GO" id="GO:0046295">
    <property type="term" value="P:glycolate biosynthetic process"/>
    <property type="evidence" value="ECO:0007669"/>
    <property type="project" value="UniProtKB-UniRule"/>
</dbReference>
<dbReference type="GO" id="GO:0019253">
    <property type="term" value="P:reductive pentose-phosphate cycle"/>
    <property type="evidence" value="ECO:0007669"/>
    <property type="project" value="UniProtKB-UniRule"/>
</dbReference>
<dbReference type="CDD" id="cd07512">
    <property type="entry name" value="HAD_PGPase"/>
    <property type="match status" value="1"/>
</dbReference>
<dbReference type="FunFam" id="3.40.50.1000:FF:000022">
    <property type="entry name" value="Phosphoglycolate phosphatase"/>
    <property type="match status" value="1"/>
</dbReference>
<dbReference type="Gene3D" id="3.40.50.1000">
    <property type="entry name" value="HAD superfamily/HAD-like"/>
    <property type="match status" value="1"/>
</dbReference>
<dbReference type="Gene3D" id="1.10.150.240">
    <property type="entry name" value="Putative phosphatase, domain 2"/>
    <property type="match status" value="1"/>
</dbReference>
<dbReference type="HAMAP" id="MF_00495">
    <property type="entry name" value="GPH_hydrolase_bact"/>
    <property type="match status" value="1"/>
</dbReference>
<dbReference type="InterPro" id="IPR050155">
    <property type="entry name" value="HAD-like_hydrolase_sf"/>
</dbReference>
<dbReference type="InterPro" id="IPR036412">
    <property type="entry name" value="HAD-like_sf"/>
</dbReference>
<dbReference type="InterPro" id="IPR006439">
    <property type="entry name" value="HAD-SF_hydro_IA"/>
</dbReference>
<dbReference type="InterPro" id="IPR023214">
    <property type="entry name" value="HAD_sf"/>
</dbReference>
<dbReference type="InterPro" id="IPR023198">
    <property type="entry name" value="PGP-like_dom2"/>
</dbReference>
<dbReference type="InterPro" id="IPR037512">
    <property type="entry name" value="PGPase_prok"/>
</dbReference>
<dbReference type="NCBIfam" id="TIGR01549">
    <property type="entry name" value="HAD-SF-IA-v1"/>
    <property type="match status" value="1"/>
</dbReference>
<dbReference type="NCBIfam" id="TIGR01509">
    <property type="entry name" value="HAD-SF-IA-v3"/>
    <property type="match status" value="1"/>
</dbReference>
<dbReference type="NCBIfam" id="TIGR01449">
    <property type="entry name" value="PGP_bact"/>
    <property type="match status" value="1"/>
</dbReference>
<dbReference type="PANTHER" id="PTHR43434">
    <property type="entry name" value="PHOSPHOGLYCOLATE PHOSPHATASE"/>
    <property type="match status" value="1"/>
</dbReference>
<dbReference type="PANTHER" id="PTHR43434:SF1">
    <property type="entry name" value="PHOSPHOGLYCOLATE PHOSPHATASE"/>
    <property type="match status" value="1"/>
</dbReference>
<dbReference type="Pfam" id="PF00702">
    <property type="entry name" value="Hydrolase"/>
    <property type="match status" value="1"/>
</dbReference>
<dbReference type="PRINTS" id="PR00413">
    <property type="entry name" value="HADHALOGNASE"/>
</dbReference>
<dbReference type="SFLD" id="SFLDG01135">
    <property type="entry name" value="C1.5.6:_HAD__Beta-PGM__Phospha"/>
    <property type="match status" value="1"/>
</dbReference>
<dbReference type="SFLD" id="SFLDS00003">
    <property type="entry name" value="Haloacid_Dehalogenase"/>
    <property type="match status" value="1"/>
</dbReference>
<dbReference type="SUPFAM" id="SSF56784">
    <property type="entry name" value="HAD-like"/>
    <property type="match status" value="1"/>
</dbReference>
<name>GPH_RHORT</name>
<accession>Q2RPW9</accession>
<feature type="chain" id="PRO_0000238174" description="Phosphoglycolate phosphatase">
    <location>
        <begin position="1"/>
        <end position="241"/>
    </location>
</feature>
<feature type="active site" description="Nucleophile" evidence="1">
    <location>
        <position position="8"/>
    </location>
</feature>
<feature type="binding site" evidence="1">
    <location>
        <position position="8"/>
    </location>
    <ligand>
        <name>Mg(2+)</name>
        <dbReference type="ChEBI" id="CHEBI:18420"/>
    </ligand>
</feature>
<feature type="binding site" evidence="1">
    <location>
        <position position="10"/>
    </location>
    <ligand>
        <name>Mg(2+)</name>
        <dbReference type="ChEBI" id="CHEBI:18420"/>
    </ligand>
</feature>
<feature type="binding site" evidence="1">
    <location>
        <position position="174"/>
    </location>
    <ligand>
        <name>Mg(2+)</name>
        <dbReference type="ChEBI" id="CHEBI:18420"/>
    </ligand>
</feature>
<sequence length="241" mass="24507">MPKAVIFDLDGTLVHSLPGLTDALNKTLAEDDLAPLDEAAVKRMVGEGAGLLVARAFAAYGLGRADDADDTATQARLARFLAHYAPDPLAGASVYPGALALLGALAARGIRLGVCTNKPEGPARALLEGLGLADPIMDVVGGDTLAQRKPDPAPLRALLDSLGVEADQALMVGDSPTDVATAKAAGVPVVVMSYGYSREPVASLGALAVFDDFASLGDWLGFPQPGGDRLGATPALSENPA</sequence>
<comment type="function">
    <text evidence="1">Specifically catalyzes the dephosphorylation of 2-phosphoglycolate. Is involved in the dissimilation of the intracellular 2-phosphoglycolate formed during the DNA repair of 3'-phosphoglycolate ends, a major class of DNA lesions induced by oxidative stress.</text>
</comment>
<comment type="catalytic activity">
    <reaction evidence="1">
        <text>2-phosphoglycolate + H2O = glycolate + phosphate</text>
        <dbReference type="Rhea" id="RHEA:14369"/>
        <dbReference type="ChEBI" id="CHEBI:15377"/>
        <dbReference type="ChEBI" id="CHEBI:29805"/>
        <dbReference type="ChEBI" id="CHEBI:43474"/>
        <dbReference type="ChEBI" id="CHEBI:58033"/>
        <dbReference type="EC" id="3.1.3.18"/>
    </reaction>
</comment>
<comment type="cofactor">
    <cofactor evidence="1">
        <name>Mg(2+)</name>
        <dbReference type="ChEBI" id="CHEBI:18420"/>
    </cofactor>
</comment>
<comment type="pathway">
    <text evidence="1">Organic acid metabolism; glycolate biosynthesis; glycolate from 2-phosphoglycolate: step 1/1.</text>
</comment>
<comment type="similarity">
    <text evidence="1">Belongs to the HAD-like hydrolase superfamily. CbbY/CbbZ/Gph/YieH family.</text>
</comment>
<comment type="sequence caution" evidence="2">
    <conflict type="erroneous initiation">
        <sequence resource="EMBL-CDS" id="ABC23826"/>
    </conflict>
    <text>Extended N-terminus.</text>
</comment>
<organism>
    <name type="scientific">Rhodospirillum rubrum (strain ATCC 11170 / ATH 1.1.1 / DSM 467 / LMG 4362 / NCIMB 8255 / S1)</name>
    <dbReference type="NCBI Taxonomy" id="269796"/>
    <lineage>
        <taxon>Bacteria</taxon>
        <taxon>Pseudomonadati</taxon>
        <taxon>Pseudomonadota</taxon>
        <taxon>Alphaproteobacteria</taxon>
        <taxon>Rhodospirillales</taxon>
        <taxon>Rhodospirillaceae</taxon>
        <taxon>Rhodospirillum</taxon>
    </lineage>
</organism>
<proteinExistence type="inferred from homology"/>
<gene>
    <name evidence="1" type="primary">cbbZ</name>
    <name type="ordered locus">Rru_A3031</name>
</gene>